<gene>
    <name type="primary">Rp1l1</name>
    <name type="synonym">Rp1hl1</name>
</gene>
<name>RP1L1_MOUSE</name>
<comment type="function">
    <text evidence="3">Required for the differentiation of photoreceptor cells. Plays a role in the organization of outer segment of rod and cone photoreceptors.</text>
</comment>
<comment type="subunit">
    <text evidence="3">Interacts with RP1; has a synergistic effect with RP1 in photoreceptor differentiation.</text>
</comment>
<comment type="subcellular location">
    <subcellularLocation>
        <location evidence="3">Cytoplasm</location>
        <location evidence="3">Cytoskeleton</location>
        <location evidence="3">Cilium axoneme</location>
    </subcellularLocation>
    <subcellularLocation>
        <location evidence="3">Cell projection</location>
        <location evidence="3">Cilium</location>
        <location evidence="3">Photoreceptor outer segment</location>
    </subcellularLocation>
    <text>Localized to the axoneme of outer segments and connecting cilia in rod photoreceptors.</text>
</comment>
<comment type="tissue specificity">
    <text>Retinal-specific; expressed in photoreceptor.</text>
</comment>
<comment type="developmental stage">
    <text>Detected in retina at birth but not at prenatal stages.</text>
</comment>
<comment type="disruption phenotype">
    <text evidence="3">Mice display scattered outer segment disorganization, reduced electroretinogram amplitudes, and progressive photoreceptor degeneration. In single rods defective cells photosensitivity is reduced. Rp1 and Rp1l1 double heterozygotes exhibits abnormal outer segment morphology and reduced single rod photosensitivity and dark currents, while individual heterozygotes are normal.</text>
</comment>
<comment type="sequence caution" evidence="4">
    <conflict type="erroneous initiation">
        <sequence resource="EMBL-CDS" id="AAH31365"/>
    </conflict>
    <text>Truncated N-terminus.</text>
</comment>
<dbReference type="EMBL" id="AY168340">
    <property type="protein sequence ID" value="AAN86958.1"/>
    <property type="molecule type" value="mRNA"/>
</dbReference>
<dbReference type="EMBL" id="AJ491325">
    <property type="protein sequence ID" value="CAD36958.1"/>
    <property type="molecule type" value="mRNA"/>
</dbReference>
<dbReference type="EMBL" id="BC031365">
    <property type="protein sequence ID" value="AAH31365.1"/>
    <property type="status" value="ALT_INIT"/>
    <property type="molecule type" value="mRNA"/>
</dbReference>
<dbReference type="CCDS" id="CCDS36951.1"/>
<dbReference type="RefSeq" id="NP_666358.2">
    <property type="nucleotide sequence ID" value="NM_146246.3"/>
</dbReference>
<dbReference type="SMR" id="Q8CGM2"/>
<dbReference type="BioGRID" id="234831">
    <property type="interactions" value="3"/>
</dbReference>
<dbReference type="FunCoup" id="Q8CGM2">
    <property type="interactions" value="37"/>
</dbReference>
<dbReference type="STRING" id="10090.ENSMUSP00000055449"/>
<dbReference type="GlyGen" id="Q8CGM2">
    <property type="glycosylation" value="3 sites"/>
</dbReference>
<dbReference type="iPTMnet" id="Q8CGM2"/>
<dbReference type="PhosphoSitePlus" id="Q8CGM2"/>
<dbReference type="PaxDb" id="10090-ENSMUSP00000055449"/>
<dbReference type="ProteomicsDB" id="260832"/>
<dbReference type="Antibodypedia" id="77523">
    <property type="antibodies" value="8 antibodies from 4 providers"/>
</dbReference>
<dbReference type="Ensembl" id="ENSMUST00000058229.6">
    <property type="protein sequence ID" value="ENSMUSP00000055449.5"/>
    <property type="gene ID" value="ENSMUSG00000046049.8"/>
</dbReference>
<dbReference type="GeneID" id="271209"/>
<dbReference type="KEGG" id="mmu:271209"/>
<dbReference type="UCSC" id="uc007uia.1">
    <property type="organism name" value="mouse"/>
</dbReference>
<dbReference type="AGR" id="MGI:2384303"/>
<dbReference type="CTD" id="94137"/>
<dbReference type="MGI" id="MGI:2384303">
    <property type="gene designation" value="Rp1l1"/>
</dbReference>
<dbReference type="VEuPathDB" id="HostDB:ENSMUSG00000046049"/>
<dbReference type="eggNOG" id="KOG3757">
    <property type="taxonomic scope" value="Eukaryota"/>
</dbReference>
<dbReference type="GeneTree" id="ENSGT00940000154242"/>
<dbReference type="HOGENOM" id="CLU_001096_0_0_1"/>
<dbReference type="InParanoid" id="Q8CGM2"/>
<dbReference type="OMA" id="MSHSSCE"/>
<dbReference type="OrthoDB" id="1738954at2759"/>
<dbReference type="PhylomeDB" id="Q8CGM2"/>
<dbReference type="TreeFam" id="TF318770"/>
<dbReference type="BioGRID-ORCS" id="271209">
    <property type="hits" value="4 hits in 76 CRISPR screens"/>
</dbReference>
<dbReference type="PRO" id="PR:Q8CGM2"/>
<dbReference type="Proteomes" id="UP000000589">
    <property type="component" value="Chromosome 14"/>
</dbReference>
<dbReference type="RNAct" id="Q8CGM2">
    <property type="molecule type" value="protein"/>
</dbReference>
<dbReference type="Bgee" id="ENSMUSG00000046049">
    <property type="expression patterns" value="Expressed in retinal neural layer and 13 other cell types or tissues"/>
</dbReference>
<dbReference type="ExpressionAtlas" id="Q8CGM2">
    <property type="expression patterns" value="baseline and differential"/>
</dbReference>
<dbReference type="GO" id="GO:0005930">
    <property type="term" value="C:axoneme"/>
    <property type="evidence" value="ECO:0000314"/>
    <property type="project" value="UniProtKB"/>
</dbReference>
<dbReference type="GO" id="GO:0032391">
    <property type="term" value="C:photoreceptor connecting cilium"/>
    <property type="evidence" value="ECO:0000314"/>
    <property type="project" value="UniProtKB"/>
</dbReference>
<dbReference type="GO" id="GO:0001750">
    <property type="term" value="C:photoreceptor outer segment"/>
    <property type="evidence" value="ECO:0000314"/>
    <property type="project" value="UniProtKB"/>
</dbReference>
<dbReference type="GO" id="GO:0030030">
    <property type="term" value="P:cell projection organization"/>
    <property type="evidence" value="ECO:0007669"/>
    <property type="project" value="UniProtKB-KW"/>
</dbReference>
<dbReference type="GO" id="GO:0035556">
    <property type="term" value="P:intracellular signal transduction"/>
    <property type="evidence" value="ECO:0007669"/>
    <property type="project" value="InterPro"/>
</dbReference>
<dbReference type="GO" id="GO:0042461">
    <property type="term" value="P:photoreceptor cell development"/>
    <property type="evidence" value="ECO:0000315"/>
    <property type="project" value="UniProtKB"/>
</dbReference>
<dbReference type="GO" id="GO:0045494">
    <property type="term" value="P:photoreceptor cell maintenance"/>
    <property type="evidence" value="ECO:0000315"/>
    <property type="project" value="UniProtKB"/>
</dbReference>
<dbReference type="GO" id="GO:0007601">
    <property type="term" value="P:visual perception"/>
    <property type="evidence" value="ECO:0007669"/>
    <property type="project" value="UniProtKB-KW"/>
</dbReference>
<dbReference type="FunFam" id="3.10.20.230:FF:000008">
    <property type="entry name" value="retinitis pigmentosa 1-like 1 protein"/>
    <property type="match status" value="1"/>
</dbReference>
<dbReference type="FunFam" id="3.10.20.230:FF:000010">
    <property type="entry name" value="Retinitis pigmentosa 1-like 1a"/>
    <property type="match status" value="1"/>
</dbReference>
<dbReference type="Gene3D" id="3.10.20.230">
    <property type="entry name" value="Doublecortin domain"/>
    <property type="match status" value="2"/>
</dbReference>
<dbReference type="InterPro" id="IPR003533">
    <property type="entry name" value="Doublecortin_dom"/>
</dbReference>
<dbReference type="InterPro" id="IPR036572">
    <property type="entry name" value="Doublecortin_dom_sf"/>
</dbReference>
<dbReference type="PANTHER" id="PTHR23005">
    <property type="entry name" value="RETINITIS PIGMENTOSA 1 PROTEIN"/>
    <property type="match status" value="1"/>
</dbReference>
<dbReference type="PANTHER" id="PTHR23005:SF3">
    <property type="entry name" value="RETINITIS PIGMENTOSA 1-LIKE 1 PROTEIN"/>
    <property type="match status" value="1"/>
</dbReference>
<dbReference type="Pfam" id="PF03607">
    <property type="entry name" value="DCX"/>
    <property type="match status" value="2"/>
</dbReference>
<dbReference type="SMART" id="SM00537">
    <property type="entry name" value="DCX"/>
    <property type="match status" value="2"/>
</dbReference>
<dbReference type="SUPFAM" id="SSF89837">
    <property type="entry name" value="Doublecortin (DC)"/>
    <property type="match status" value="2"/>
</dbReference>
<dbReference type="PROSITE" id="PS50309">
    <property type="entry name" value="DC"/>
    <property type="match status" value="2"/>
</dbReference>
<evidence type="ECO:0000255" key="1">
    <source>
        <dbReference type="PROSITE-ProRule" id="PRU00072"/>
    </source>
</evidence>
<evidence type="ECO:0000256" key="2">
    <source>
        <dbReference type="SAM" id="MobiDB-lite"/>
    </source>
</evidence>
<evidence type="ECO:0000269" key="3">
    <source>
    </source>
</evidence>
<evidence type="ECO:0000305" key="4"/>
<accession>Q8CGM2</accession>
<accession>Q8K0I4</accession>
<feature type="chain" id="PRO_0000097407" description="Retinitis pigmentosa 1-like 1 protein">
    <location>
        <begin position="1"/>
        <end position="1859"/>
    </location>
</feature>
<feature type="domain" description="Doublecortin 1" evidence="1">
    <location>
        <begin position="42"/>
        <end position="126"/>
    </location>
</feature>
<feature type="domain" description="Doublecortin 2" evidence="1">
    <location>
        <begin position="160"/>
        <end position="239"/>
    </location>
</feature>
<feature type="region of interest" description="Disordered" evidence="2">
    <location>
        <begin position="1"/>
        <end position="22"/>
    </location>
</feature>
<feature type="region of interest" description="Disordered" evidence="2">
    <location>
        <begin position="115"/>
        <end position="154"/>
    </location>
</feature>
<feature type="region of interest" description="Disordered" evidence="2">
    <location>
        <begin position="263"/>
        <end position="301"/>
    </location>
</feature>
<feature type="region of interest" description="Disordered" evidence="2">
    <location>
        <begin position="426"/>
        <end position="445"/>
    </location>
</feature>
<feature type="region of interest" description="Disordered" evidence="2">
    <location>
        <begin position="457"/>
        <end position="593"/>
    </location>
</feature>
<feature type="region of interest" description="Disordered" evidence="2">
    <location>
        <begin position="700"/>
        <end position="750"/>
    </location>
</feature>
<feature type="region of interest" description="Disordered" evidence="2">
    <location>
        <begin position="868"/>
        <end position="920"/>
    </location>
</feature>
<feature type="region of interest" description="Disordered" evidence="2">
    <location>
        <begin position="952"/>
        <end position="997"/>
    </location>
</feature>
<feature type="region of interest" description="Disordered" evidence="2">
    <location>
        <begin position="1152"/>
        <end position="1211"/>
    </location>
</feature>
<feature type="region of interest" description="Disordered" evidence="2">
    <location>
        <begin position="1227"/>
        <end position="1255"/>
    </location>
</feature>
<feature type="region of interest" description="Disordered" evidence="2">
    <location>
        <begin position="1298"/>
        <end position="1350"/>
    </location>
</feature>
<feature type="region of interest" description="Disordered" evidence="2">
    <location>
        <begin position="1567"/>
        <end position="1859"/>
    </location>
</feature>
<feature type="compositionally biased region" description="Basic and acidic residues" evidence="2">
    <location>
        <begin position="115"/>
        <end position="126"/>
    </location>
</feature>
<feature type="compositionally biased region" description="Polar residues" evidence="2">
    <location>
        <begin position="130"/>
        <end position="139"/>
    </location>
</feature>
<feature type="compositionally biased region" description="Basic and acidic residues" evidence="2">
    <location>
        <begin position="457"/>
        <end position="472"/>
    </location>
</feature>
<feature type="compositionally biased region" description="Polar residues" evidence="2">
    <location>
        <begin position="499"/>
        <end position="512"/>
    </location>
</feature>
<feature type="compositionally biased region" description="Polar residues" evidence="2">
    <location>
        <begin position="535"/>
        <end position="551"/>
    </location>
</feature>
<feature type="compositionally biased region" description="Low complexity" evidence="2">
    <location>
        <begin position="716"/>
        <end position="728"/>
    </location>
</feature>
<feature type="compositionally biased region" description="Polar residues" evidence="2">
    <location>
        <begin position="734"/>
        <end position="750"/>
    </location>
</feature>
<feature type="compositionally biased region" description="Low complexity" evidence="2">
    <location>
        <begin position="870"/>
        <end position="883"/>
    </location>
</feature>
<feature type="compositionally biased region" description="Polar residues" evidence="2">
    <location>
        <begin position="1241"/>
        <end position="1252"/>
    </location>
</feature>
<feature type="compositionally biased region" description="Polar residues" evidence="2">
    <location>
        <begin position="1336"/>
        <end position="1345"/>
    </location>
</feature>
<feature type="compositionally biased region" description="Polar residues" evidence="2">
    <location>
        <begin position="1567"/>
        <end position="1577"/>
    </location>
</feature>
<feature type="compositionally biased region" description="Basic and acidic residues" evidence="2">
    <location>
        <begin position="1616"/>
        <end position="1632"/>
    </location>
</feature>
<feature type="compositionally biased region" description="Acidic residues" evidence="2">
    <location>
        <begin position="1641"/>
        <end position="1652"/>
    </location>
</feature>
<feature type="compositionally biased region" description="Basic and acidic residues" evidence="2">
    <location>
        <begin position="1700"/>
        <end position="1720"/>
    </location>
</feature>
<feature type="compositionally biased region" description="Polar residues" evidence="2">
    <location>
        <begin position="1756"/>
        <end position="1778"/>
    </location>
</feature>
<proteinExistence type="evidence at protein level"/>
<keyword id="KW-0966">Cell projection</keyword>
<keyword id="KW-0969">Cilium</keyword>
<keyword id="KW-0970">Cilium biogenesis/degradation</keyword>
<keyword id="KW-0963">Cytoplasm</keyword>
<keyword id="KW-0206">Cytoskeleton</keyword>
<keyword id="KW-1185">Reference proteome</keyword>
<keyword id="KW-0677">Repeat</keyword>
<keyword id="KW-0716">Sensory transduction</keyword>
<keyword id="KW-0844">Vision</keyword>
<protein>
    <recommendedName>
        <fullName>Retinitis pigmentosa 1-like 1 protein</fullName>
    </recommendedName>
    <alternativeName>
        <fullName>Retinitis pigmentosa 1-like protein 1</fullName>
    </alternativeName>
</protein>
<reference key="1">
    <citation type="journal article" date="2003" name="Mol. Vis.">
        <title>Characterization of RP1L1, a highly polymorphic paralog of the retinitis pigmentosa 1 (RP1) gene.</title>
        <authorList>
            <person name="Bowne S.J."/>
            <person name="Daiger S.P."/>
            <person name="Malone K.A."/>
            <person name="Heckenlively J.R."/>
            <person name="Kennan A."/>
            <person name="Humphries P."/>
            <person name="Hughbanks-Wheaton D."/>
            <person name="Birch D.G."/>
            <person name="Liu Q."/>
            <person name="Pierce E.A."/>
            <person name="Zuo J."/>
            <person name="Huang Q."/>
            <person name="Donovan D.D."/>
            <person name="Sullivan L.S."/>
        </authorList>
    </citation>
    <scope>NUCLEOTIDE SEQUENCE [MRNA]</scope>
</reference>
<reference key="2">
    <citation type="journal article" date="2003" name="Eur. J. Hum. Genet.">
        <title>Identification and characterization of the retinitis pigmentosa 1-like1 gene (rp1l1): a novel candidate for retinal degenerations.</title>
        <authorList>
            <person name="Conte I."/>
            <person name="Lestingi M."/>
            <person name="den Hollander A."/>
            <person name="Alfano G."/>
            <person name="Ziviello C."/>
            <person name="Pugliese M."/>
            <person name="Circolo D."/>
            <person name="Caccioppoli C."/>
            <person name="Ciccodicola A."/>
            <person name="Banfi S."/>
        </authorList>
    </citation>
    <scope>NUCLEOTIDE SEQUENCE [MRNA]</scope>
    <source>
        <strain>BALB/cJ</strain>
        <tissue>Retina</tissue>
    </source>
</reference>
<reference key="3">
    <citation type="journal article" date="2004" name="Genome Res.">
        <title>The status, quality, and expansion of the NIH full-length cDNA project: the Mammalian Gene Collection (MGC).</title>
        <authorList>
            <consortium name="The MGC Project Team"/>
        </authorList>
    </citation>
    <scope>NUCLEOTIDE SEQUENCE [LARGE SCALE MRNA] OF 1216-1859</scope>
    <source>
        <tissue>Retina</tissue>
    </source>
</reference>
<reference key="4">
    <citation type="journal article" date="2009" name="J. Neurosci.">
        <title>Essential and synergistic roles of RP1 and RP1L1 in rod photoreceptor axoneme and retinitis pigmentosa.</title>
        <authorList>
            <person name="Yamashita T."/>
            <person name="Liu J."/>
            <person name="Gao J."/>
            <person name="LeNoue S."/>
            <person name="Wang C."/>
            <person name="Kaminoh J."/>
            <person name="Bowne S.J."/>
            <person name="Sullivan L.S."/>
            <person name="Daiger S.P."/>
            <person name="Zhang K."/>
            <person name="Fitzgerald M.E."/>
            <person name="Kefalov V.J."/>
            <person name="Zuo J."/>
        </authorList>
    </citation>
    <scope>FUNCTION</scope>
    <scope>SUBCELLULAR LOCATION</scope>
    <scope>DISRUPTION PHENOTYPE</scope>
    <scope>INTERACTION WITH RP1</scope>
</reference>
<sequence length="1859" mass="199686">MNSTPGDTRDAPAPSHPAPSHRQCLLPSVAHTPSVTEVTPAKKITFLKRGDPQFAGVRLAVHQRTFKTFSSLMDELSQRMPLSFGVRSVTTPRGLHGLSALEQLQDGGCYLCSDRKPPKTSREPGRLQRKSPSAGQAQVFQGGHEAPETSYSWKGPVAPRRLTLVKNGDPRRQQTVVLSHKNTRSLAAFLGKASELLRFPVKQVYTTRGKKVDSLQTLLDGPSVLVCAGNEAFRCLEMENDRGNRTRKLSSVTARSERGCWGPNAKQSVIHSRGRSGGKLRQVSLTSERSGLSDHPASGHRAWAGPALDRCPQDMPVPPGSLVAADDVEKKVCMNEDGSLSVEMKVRFQLLGEDTLRWSQRVGQASVFTAASGKGQDPREADRFCCRQEGYPWGILKPGAQGLGSYDGGCQEAFDVGQKSQPSYDIWRNPLATPEGTGPTPRRRWGLAKLSGCKSHWRQEANHRKGHDKDNLSRVSTPRHPRSVQPGSCCPWTPDGDTGSDTLHPVSSASSHNETDLESGEGLCLEDTGPHGSRPETQSTERALSDTSVSAKSREESSEGGGQLHRSSSQARVMASREQVTKGDNPCISTQSHLPLNHMGLQTEKYRQGTRGWEVSGEPELRLALVPGHSGSQDTQRDALPAPACAPAQWRQRKQKRPASVECLPSVSVPYQVAQKGHARQDHYYRDTQSSLDTALQMPMPQEREQACPGSPAPQSPSNSPSAGNQASEDLRSPFSSSLDLQEPQATSKATTIAVSGSDCVCHSTRSVEPAGDTKCQAHSSTPTPAHRGELGCLWDKAGTTPEPFSFSVLLDRCPEADDPRTYHDCCCLQAVPSSPLAAPSGQTQTSISEACLGGSSFCPTPPKEQTCFGRESASNGSTSSGHSRADGFAGPRRTLLVKSPGVRGSLEEREADGGVTPSALPYASPDAVVREWLGNIPEKPVLMTYEMADENTEVPSDGPEGPKEDSLKVLGEPSQAKQQPPEGATNEHPEPAGVLSGPGSVCCRLGGDLHPDATSGERLKAPAEAGIGEGARVDHGVSLCALPTKVAASTQIMKALLGSKPGRPSSLPEVSSTVAQRLSSSAGAFIACLARLHFFDESLGPLDGKVRLEESPKYQEMLRLFQTLWPGSELWQGQLDFSLRKLTSHQALLGTEDFTPTSSSGVDVSSGSGGSGESSVPCVMDNTLAPEKRDLPLKIPSQRPDSRNQGYPELVGHSTVSSVSQVRACATGGEETGKGGRKQTWGNAPEQSVHSTMLEGDALSEETEGRVRERLQENSVHGKGLPEEGVRVCSQEMLAAGSQDGAGSPEDTRVPTDEAGADAASGGLWPLDGREEPTESPQHFSESNSRVREHQSAHKLELGLEEVSRLDARGCKQACIKASSGTMAHKGSLDPDPIWVSKLLKKIEKAFMAHLADATAELRARWDLHDNHLLDQMVTELEQDVGRRLQASTVMEVRKIQSRAGRMVPEPPREALRGQASLQTEQRRRRLQGLRNFSAVPGQGPLSLTLEDGPTLKTALGTKSGAEPAEDEFCPCEICLKKKRTPRFPKDAATVSGAPVRKAFDLQQILQSKKGGSSNREAMEVAPQRTGRMLSQEDLGTVQGADEKQGLGVAEGEEGEGKQRLRAEEDPEILKTEGSGCCAPEEDEATEEDGEICIGTAQESQQLEGTEMGKEGTLPQSFRDGGTLEAPARQGTHSVEIQEASRERQQEVEGRHQDVKEDSPWVSSGESQGRVGSENTSLDQEGRLLNHHQRPGPQSHHTACSSRALSLDNSSQVSQKGSDGDLTSGDLKCTKAKNSRVLHAEKKVPVMYPERSSSEQEVPSSPRLPKQGKGEDEGSAGSLACTQVGGKVDGFGQDDLDF</sequence>
<organism>
    <name type="scientific">Mus musculus</name>
    <name type="common">Mouse</name>
    <dbReference type="NCBI Taxonomy" id="10090"/>
    <lineage>
        <taxon>Eukaryota</taxon>
        <taxon>Metazoa</taxon>
        <taxon>Chordata</taxon>
        <taxon>Craniata</taxon>
        <taxon>Vertebrata</taxon>
        <taxon>Euteleostomi</taxon>
        <taxon>Mammalia</taxon>
        <taxon>Eutheria</taxon>
        <taxon>Euarchontoglires</taxon>
        <taxon>Glires</taxon>
        <taxon>Rodentia</taxon>
        <taxon>Myomorpha</taxon>
        <taxon>Muroidea</taxon>
        <taxon>Muridae</taxon>
        <taxon>Murinae</taxon>
        <taxon>Mus</taxon>
        <taxon>Mus</taxon>
    </lineage>
</organism>